<protein>
    <recommendedName>
        <fullName>Fibrinogen beta chain</fullName>
    </recommendedName>
    <component>
        <recommendedName>
            <fullName>Fibrinopeptide B</fullName>
        </recommendedName>
    </component>
</protein>
<evidence type="ECO:0000250" key="1">
    <source>
        <dbReference type="UniProtKB" id="E9PV24"/>
    </source>
</evidence>
<evidence type="ECO:0000250" key="2">
    <source>
        <dbReference type="UniProtKB" id="P02675"/>
    </source>
</evidence>
<evidence type="ECO:0000250" key="3">
    <source>
        <dbReference type="UniProtKB" id="P02676"/>
    </source>
</evidence>
<evidence type="ECO:0000269" key="4">
    <source>
    </source>
</evidence>
<organism>
    <name type="scientific">Camelus dromedarius</name>
    <name type="common">Dromedary</name>
    <name type="synonym">Arabian camel</name>
    <dbReference type="NCBI Taxonomy" id="9838"/>
    <lineage>
        <taxon>Eukaryota</taxon>
        <taxon>Metazoa</taxon>
        <taxon>Chordata</taxon>
        <taxon>Craniata</taxon>
        <taxon>Vertebrata</taxon>
        <taxon>Euteleostomi</taxon>
        <taxon>Mammalia</taxon>
        <taxon>Eutheria</taxon>
        <taxon>Laurasiatheria</taxon>
        <taxon>Artiodactyla</taxon>
        <taxon>Tylopoda</taxon>
        <taxon>Camelidae</taxon>
        <taxon>Camelus</taxon>
    </lineage>
</organism>
<proteinExistence type="evidence at protein level"/>
<feature type="peptide" id="PRO_0000009058" description="Fibrinopeptide B">
    <location>
        <begin position="1"/>
        <end position="19"/>
    </location>
</feature>
<feature type="modified residue" description="Sulfotyrosine" evidence="4">
    <location>
        <position position="4"/>
    </location>
</feature>
<feature type="glycosylation site" description="O-linked (GalNAc...) threonine" evidence="3">
    <location>
        <position position="2"/>
    </location>
</feature>
<feature type="non-terminal residue">
    <location>
        <position position="19"/>
    </location>
</feature>
<keyword id="KW-1064">Adaptive immunity</keyword>
<keyword id="KW-0094">Blood coagulation</keyword>
<keyword id="KW-0175">Coiled coil</keyword>
<keyword id="KW-0903">Direct protein sequencing</keyword>
<keyword id="KW-1015">Disulfide bond</keyword>
<keyword id="KW-0325">Glycoprotein</keyword>
<keyword id="KW-0356">Hemostasis</keyword>
<keyword id="KW-0391">Immunity</keyword>
<keyword id="KW-0399">Innate immunity</keyword>
<keyword id="KW-0964">Secreted</keyword>
<keyword id="KW-0765">Sulfation</keyword>
<gene>
    <name type="primary">FGB</name>
</gene>
<dbReference type="GlyCosmos" id="P68123">
    <property type="glycosylation" value="1 site, No reported glycans"/>
</dbReference>
<dbReference type="GO" id="GO:0005576">
    <property type="term" value="C:extracellular region"/>
    <property type="evidence" value="ECO:0007669"/>
    <property type="project" value="UniProtKB-SubCell"/>
</dbReference>
<dbReference type="GO" id="GO:0002250">
    <property type="term" value="P:adaptive immune response"/>
    <property type="evidence" value="ECO:0007669"/>
    <property type="project" value="UniProtKB-KW"/>
</dbReference>
<dbReference type="GO" id="GO:0007596">
    <property type="term" value="P:blood coagulation"/>
    <property type="evidence" value="ECO:0007669"/>
    <property type="project" value="UniProtKB-KW"/>
</dbReference>
<dbReference type="GO" id="GO:0045087">
    <property type="term" value="P:innate immune response"/>
    <property type="evidence" value="ECO:0007669"/>
    <property type="project" value="UniProtKB-KW"/>
</dbReference>
<name>FIBB_CAMDR</name>
<comment type="function">
    <text evidence="1">Cleaved by the protease thrombin to yield monomers which, together with fibrinogen alpha (FGA) and fibrinogen gamma (FGG), polymerize to form an insoluble fibrin matrix. Fibrin has a major function in hemostasis as one of the primary components of blood clots. In addition, functions during the early stages of wound repair to stabilize the lesion and guide cell migration during re-epithelialization. Was originally thought to be essential for platelet aggregation, based on in vitro studies using anticoagulated blood. However subsequent studies have shown that it is not absolutely required for thrombus formation in vivo. Enhances expression of SELP in activated platelets. Maternal fibrinogen is essential for successful pregnancy. Fibrin deposition is also associated with infection, where it protects against IFNG-mediated hemorrhage. May also facilitate the antibacterial immune response via both innate and T-cell mediated pathways.</text>
</comment>
<comment type="subunit">
    <text evidence="2">Heterohexamer; disulfide linked. Contains 2 sets of 3 non-identical chains (alpha, beta and gamma). The 2 heterotrimers are in head to head conformation with the N-termini in a small central domain (By similarity).</text>
</comment>
<comment type="subcellular location">
    <subcellularLocation>
        <location>Secreted</location>
    </subcellularLocation>
</comment>
<comment type="domain">
    <text evidence="2">A long coiled coil structure formed by 3 polypeptide chains connects the central nodule to the C-terminal domains (distal nodules). The long C-terminal ends of the alpha chains fold back, contributing a fourth strand to the coiled coil structure.</text>
</comment>
<comment type="PTM">
    <text>Conversion of fibrinogen to fibrin is triggered by thrombin, which cleaves fibrinopeptides A and B from alpha and beta chains, and thus exposes the N-terminal polymerization sites responsible for the formation of the soft clot.</text>
</comment>
<reference key="1">
    <citation type="journal article" date="1967" name="Arch. Biochem. Biophys.">
        <title>Amino acid sequence studies on artiodactyl fibrinopeptides. I. Dromedary camel, mule deer, and cape buffalo.</title>
        <authorList>
            <person name="Doolittle R.F."/>
            <person name="Schubert D."/>
            <person name="Schwartz S.A."/>
        </authorList>
    </citation>
    <scope>PROTEIN SEQUENCE</scope>
    <scope>SULFATION AT TYR-4</scope>
</reference>
<sequence length="19" mass="2295">ATDYDEEEDDRVKVRLDAR</sequence>
<accession>P68123</accession>
<accession>P14473</accession>